<protein>
    <recommendedName>
        <fullName evidence="1">ATP-dependent 6-phosphofructokinase</fullName>
        <shortName evidence="1">ATP-PFK</shortName>
        <shortName evidence="1">Phosphofructokinase</shortName>
        <ecNumber evidence="1">2.7.1.11</ecNumber>
    </recommendedName>
    <alternativeName>
        <fullName evidence="1">Phosphohexokinase</fullName>
    </alternativeName>
</protein>
<dbReference type="EC" id="2.7.1.11" evidence="1"/>
<dbReference type="EMBL" id="CP001407">
    <property type="protein sequence ID" value="ACO28003.1"/>
    <property type="molecule type" value="Genomic_DNA"/>
</dbReference>
<dbReference type="RefSeq" id="WP_000821163.1">
    <property type="nucleotide sequence ID" value="NZ_CP009318.1"/>
</dbReference>
<dbReference type="SMR" id="C1EUU3"/>
<dbReference type="GeneID" id="93006511"/>
<dbReference type="KEGG" id="bcx:BCA_4709"/>
<dbReference type="PATRIC" id="fig|572264.18.peg.4658"/>
<dbReference type="UniPathway" id="UPA00109">
    <property type="reaction ID" value="UER00182"/>
</dbReference>
<dbReference type="Proteomes" id="UP000002210">
    <property type="component" value="Chromosome"/>
</dbReference>
<dbReference type="GO" id="GO:0005945">
    <property type="term" value="C:6-phosphofructokinase complex"/>
    <property type="evidence" value="ECO:0007669"/>
    <property type="project" value="TreeGrafter"/>
</dbReference>
<dbReference type="GO" id="GO:0003872">
    <property type="term" value="F:6-phosphofructokinase activity"/>
    <property type="evidence" value="ECO:0007669"/>
    <property type="project" value="UniProtKB-UniRule"/>
</dbReference>
<dbReference type="GO" id="GO:0016208">
    <property type="term" value="F:AMP binding"/>
    <property type="evidence" value="ECO:0007669"/>
    <property type="project" value="TreeGrafter"/>
</dbReference>
<dbReference type="GO" id="GO:0005524">
    <property type="term" value="F:ATP binding"/>
    <property type="evidence" value="ECO:0007669"/>
    <property type="project" value="UniProtKB-KW"/>
</dbReference>
<dbReference type="GO" id="GO:0070095">
    <property type="term" value="F:fructose-6-phosphate binding"/>
    <property type="evidence" value="ECO:0007669"/>
    <property type="project" value="TreeGrafter"/>
</dbReference>
<dbReference type="GO" id="GO:0042802">
    <property type="term" value="F:identical protein binding"/>
    <property type="evidence" value="ECO:0007669"/>
    <property type="project" value="TreeGrafter"/>
</dbReference>
<dbReference type="GO" id="GO:0046872">
    <property type="term" value="F:metal ion binding"/>
    <property type="evidence" value="ECO:0007669"/>
    <property type="project" value="UniProtKB-KW"/>
</dbReference>
<dbReference type="GO" id="GO:0048029">
    <property type="term" value="F:monosaccharide binding"/>
    <property type="evidence" value="ECO:0007669"/>
    <property type="project" value="TreeGrafter"/>
</dbReference>
<dbReference type="GO" id="GO:0061621">
    <property type="term" value="P:canonical glycolysis"/>
    <property type="evidence" value="ECO:0007669"/>
    <property type="project" value="TreeGrafter"/>
</dbReference>
<dbReference type="GO" id="GO:0030388">
    <property type="term" value="P:fructose 1,6-bisphosphate metabolic process"/>
    <property type="evidence" value="ECO:0007669"/>
    <property type="project" value="TreeGrafter"/>
</dbReference>
<dbReference type="GO" id="GO:0006002">
    <property type="term" value="P:fructose 6-phosphate metabolic process"/>
    <property type="evidence" value="ECO:0007669"/>
    <property type="project" value="InterPro"/>
</dbReference>
<dbReference type="CDD" id="cd00763">
    <property type="entry name" value="Bacterial_PFK"/>
    <property type="match status" value="1"/>
</dbReference>
<dbReference type="FunFam" id="3.40.50.450:FF:000001">
    <property type="entry name" value="ATP-dependent 6-phosphofructokinase"/>
    <property type="match status" value="1"/>
</dbReference>
<dbReference type="FunFam" id="3.40.50.460:FF:000002">
    <property type="entry name" value="ATP-dependent 6-phosphofructokinase"/>
    <property type="match status" value="1"/>
</dbReference>
<dbReference type="Gene3D" id="3.40.50.450">
    <property type="match status" value="1"/>
</dbReference>
<dbReference type="Gene3D" id="3.40.50.460">
    <property type="entry name" value="Phosphofructokinase domain"/>
    <property type="match status" value="1"/>
</dbReference>
<dbReference type="HAMAP" id="MF_00339">
    <property type="entry name" value="Phosphofructokinase_I_B1"/>
    <property type="match status" value="1"/>
</dbReference>
<dbReference type="InterPro" id="IPR022953">
    <property type="entry name" value="ATP_PFK"/>
</dbReference>
<dbReference type="InterPro" id="IPR012003">
    <property type="entry name" value="ATP_PFK_prok-type"/>
</dbReference>
<dbReference type="InterPro" id="IPR012828">
    <property type="entry name" value="PFKA_ATP_prok"/>
</dbReference>
<dbReference type="InterPro" id="IPR015912">
    <property type="entry name" value="Phosphofructokinase_CS"/>
</dbReference>
<dbReference type="InterPro" id="IPR000023">
    <property type="entry name" value="Phosphofructokinase_dom"/>
</dbReference>
<dbReference type="InterPro" id="IPR035966">
    <property type="entry name" value="PKF_sf"/>
</dbReference>
<dbReference type="NCBIfam" id="TIGR02482">
    <property type="entry name" value="PFKA_ATP"/>
    <property type="match status" value="1"/>
</dbReference>
<dbReference type="NCBIfam" id="NF002872">
    <property type="entry name" value="PRK03202.1"/>
    <property type="match status" value="1"/>
</dbReference>
<dbReference type="PANTHER" id="PTHR13697:SF4">
    <property type="entry name" value="ATP-DEPENDENT 6-PHOSPHOFRUCTOKINASE"/>
    <property type="match status" value="1"/>
</dbReference>
<dbReference type="PANTHER" id="PTHR13697">
    <property type="entry name" value="PHOSPHOFRUCTOKINASE"/>
    <property type="match status" value="1"/>
</dbReference>
<dbReference type="Pfam" id="PF00365">
    <property type="entry name" value="PFK"/>
    <property type="match status" value="1"/>
</dbReference>
<dbReference type="PIRSF" id="PIRSF000532">
    <property type="entry name" value="ATP_PFK_prok"/>
    <property type="match status" value="1"/>
</dbReference>
<dbReference type="PRINTS" id="PR00476">
    <property type="entry name" value="PHFRCTKINASE"/>
</dbReference>
<dbReference type="SUPFAM" id="SSF53784">
    <property type="entry name" value="Phosphofructokinase"/>
    <property type="match status" value="1"/>
</dbReference>
<dbReference type="PROSITE" id="PS00433">
    <property type="entry name" value="PHOSPHOFRUCTOKINASE"/>
    <property type="match status" value="1"/>
</dbReference>
<name>PFKA_BACC3</name>
<feature type="chain" id="PRO_1000192362" description="ATP-dependent 6-phosphofructokinase">
    <location>
        <begin position="1"/>
        <end position="319"/>
    </location>
</feature>
<feature type="active site" description="Proton acceptor" evidence="1">
    <location>
        <position position="127"/>
    </location>
</feature>
<feature type="binding site" evidence="1">
    <location>
        <position position="11"/>
    </location>
    <ligand>
        <name>ATP</name>
        <dbReference type="ChEBI" id="CHEBI:30616"/>
    </ligand>
</feature>
<feature type="binding site" evidence="1">
    <location>
        <begin position="21"/>
        <end position="25"/>
    </location>
    <ligand>
        <name>ADP</name>
        <dbReference type="ChEBI" id="CHEBI:456216"/>
        <note>allosteric activator; ligand shared between dimeric partners</note>
    </ligand>
</feature>
<feature type="binding site" evidence="1">
    <location>
        <begin position="72"/>
        <end position="73"/>
    </location>
    <ligand>
        <name>ATP</name>
        <dbReference type="ChEBI" id="CHEBI:30616"/>
    </ligand>
</feature>
<feature type="binding site" evidence="1">
    <location>
        <begin position="102"/>
        <end position="105"/>
    </location>
    <ligand>
        <name>ATP</name>
        <dbReference type="ChEBI" id="CHEBI:30616"/>
    </ligand>
</feature>
<feature type="binding site" evidence="1">
    <location>
        <position position="103"/>
    </location>
    <ligand>
        <name>Mg(2+)</name>
        <dbReference type="ChEBI" id="CHEBI:18420"/>
        <note>catalytic</note>
    </ligand>
</feature>
<feature type="binding site" description="in other chain" evidence="1">
    <location>
        <begin position="125"/>
        <end position="127"/>
    </location>
    <ligand>
        <name>substrate</name>
        <note>ligand shared between dimeric partners</note>
    </ligand>
</feature>
<feature type="binding site" description="in other chain" evidence="1">
    <location>
        <position position="154"/>
    </location>
    <ligand>
        <name>ADP</name>
        <dbReference type="ChEBI" id="CHEBI:456216"/>
        <note>allosteric activator; ligand shared between dimeric partners</note>
    </ligand>
</feature>
<feature type="binding site" evidence="1">
    <location>
        <position position="162"/>
    </location>
    <ligand>
        <name>substrate</name>
        <note>ligand shared between dimeric partners</note>
    </ligand>
</feature>
<feature type="binding site" description="in other chain" evidence="1">
    <location>
        <begin position="169"/>
        <end position="171"/>
    </location>
    <ligand>
        <name>substrate</name>
        <note>ligand shared between dimeric partners</note>
    </ligand>
</feature>
<feature type="binding site" description="in other chain" evidence="1">
    <location>
        <begin position="185"/>
        <end position="187"/>
    </location>
    <ligand>
        <name>ADP</name>
        <dbReference type="ChEBI" id="CHEBI:456216"/>
        <note>allosteric activator; ligand shared between dimeric partners</note>
    </ligand>
</feature>
<feature type="binding site" description="in other chain" evidence="1">
    <location>
        <position position="211"/>
    </location>
    <ligand>
        <name>ADP</name>
        <dbReference type="ChEBI" id="CHEBI:456216"/>
        <note>allosteric activator; ligand shared between dimeric partners</note>
    </ligand>
</feature>
<feature type="binding site" description="in other chain" evidence="1">
    <location>
        <begin position="213"/>
        <end position="215"/>
    </location>
    <ligand>
        <name>ADP</name>
        <dbReference type="ChEBI" id="CHEBI:456216"/>
        <note>allosteric activator; ligand shared between dimeric partners</note>
    </ligand>
</feature>
<feature type="binding site" description="in other chain" evidence="1">
    <location>
        <position position="222"/>
    </location>
    <ligand>
        <name>substrate</name>
        <note>ligand shared between dimeric partners</note>
    </ligand>
</feature>
<feature type="binding site" evidence="1">
    <location>
        <position position="243"/>
    </location>
    <ligand>
        <name>substrate</name>
        <note>ligand shared between dimeric partners</note>
    </ligand>
</feature>
<feature type="binding site" description="in other chain" evidence="1">
    <location>
        <begin position="249"/>
        <end position="252"/>
    </location>
    <ligand>
        <name>substrate</name>
        <note>ligand shared between dimeric partners</note>
    </ligand>
</feature>
<reference key="1">
    <citation type="submission" date="2009-02" db="EMBL/GenBank/DDBJ databases">
        <title>Genome sequence of Bacillus cereus 03BB102.</title>
        <authorList>
            <person name="Dodson R.J."/>
            <person name="Jackson P."/>
            <person name="Munk A.C."/>
            <person name="Brettin T."/>
            <person name="Bruce D."/>
            <person name="Detter C."/>
            <person name="Tapia R."/>
            <person name="Han C."/>
            <person name="Sutton G."/>
            <person name="Sims D."/>
        </authorList>
    </citation>
    <scope>NUCLEOTIDE SEQUENCE [LARGE SCALE GENOMIC DNA]</scope>
    <source>
        <strain>03BB102</strain>
    </source>
</reference>
<gene>
    <name evidence="1" type="primary">pfkA</name>
    <name type="ordered locus">BCA_4709</name>
</gene>
<accession>C1EUU3</accession>
<organism>
    <name type="scientific">Bacillus cereus (strain 03BB102)</name>
    <dbReference type="NCBI Taxonomy" id="572264"/>
    <lineage>
        <taxon>Bacteria</taxon>
        <taxon>Bacillati</taxon>
        <taxon>Bacillota</taxon>
        <taxon>Bacilli</taxon>
        <taxon>Bacillales</taxon>
        <taxon>Bacillaceae</taxon>
        <taxon>Bacillus</taxon>
        <taxon>Bacillus cereus group</taxon>
    </lineage>
</organism>
<evidence type="ECO:0000255" key="1">
    <source>
        <dbReference type="HAMAP-Rule" id="MF_00339"/>
    </source>
</evidence>
<proteinExistence type="inferred from homology"/>
<sequence length="319" mass="34308">MKRIGVLTSGGDSPGMNAAIRAVVRKAIFHDIEVYGIYHGYAGLISGHIEKLELGSVGDIIHRGGTKLYTARCPEFKDPEVRLKGIEQLKKHGIEGLVVIGGDGSYQGAKKLTEQGFPCVGVPGTIDNDIPGTDFTIGFDTALNTVIDAIDKIRDTATSHERTYVIEVMGRHAGDIALWAGLADGAETILIPEEEYDMEDVIARLKRGSERGKKHSIIVVAEGVGSAIDIGKHIEEATNFDTRVTVLGHVQRGGSPSAQDRVLASRLGARAVELLIAGKGGRCVGIQDNKLVDHDIIEALAQKHTIDKDMYQLSKELSI</sequence>
<comment type="function">
    <text evidence="1">Catalyzes the phosphorylation of D-fructose 6-phosphate to fructose 1,6-bisphosphate by ATP, the first committing step of glycolysis.</text>
</comment>
<comment type="catalytic activity">
    <reaction evidence="1">
        <text>beta-D-fructose 6-phosphate + ATP = beta-D-fructose 1,6-bisphosphate + ADP + H(+)</text>
        <dbReference type="Rhea" id="RHEA:16109"/>
        <dbReference type="ChEBI" id="CHEBI:15378"/>
        <dbReference type="ChEBI" id="CHEBI:30616"/>
        <dbReference type="ChEBI" id="CHEBI:32966"/>
        <dbReference type="ChEBI" id="CHEBI:57634"/>
        <dbReference type="ChEBI" id="CHEBI:456216"/>
        <dbReference type="EC" id="2.7.1.11"/>
    </reaction>
</comment>
<comment type="cofactor">
    <cofactor evidence="1">
        <name>Mg(2+)</name>
        <dbReference type="ChEBI" id="CHEBI:18420"/>
    </cofactor>
</comment>
<comment type="activity regulation">
    <text evidence="1">Allosterically activated by ADP and other diphosphonucleosides, and allosterically inhibited by phosphoenolpyruvate.</text>
</comment>
<comment type="pathway">
    <text evidence="1">Carbohydrate degradation; glycolysis; D-glyceraldehyde 3-phosphate and glycerone phosphate from D-glucose: step 3/4.</text>
</comment>
<comment type="subunit">
    <text evidence="1">Homotetramer.</text>
</comment>
<comment type="subcellular location">
    <subcellularLocation>
        <location evidence="1">Cytoplasm</location>
    </subcellularLocation>
</comment>
<comment type="similarity">
    <text evidence="1">Belongs to the phosphofructokinase type A (PFKA) family. ATP-dependent PFK group I subfamily. Prokaryotic clade 'B1' sub-subfamily.</text>
</comment>
<keyword id="KW-0021">Allosteric enzyme</keyword>
<keyword id="KW-0067">ATP-binding</keyword>
<keyword id="KW-0963">Cytoplasm</keyword>
<keyword id="KW-0324">Glycolysis</keyword>
<keyword id="KW-0418">Kinase</keyword>
<keyword id="KW-0460">Magnesium</keyword>
<keyword id="KW-0479">Metal-binding</keyword>
<keyword id="KW-0547">Nucleotide-binding</keyword>
<keyword id="KW-0808">Transferase</keyword>